<dbReference type="EC" id="1.5.1.5" evidence="1"/>
<dbReference type="EC" id="3.5.4.9" evidence="1"/>
<dbReference type="EMBL" id="AE005672">
    <property type="protein sequence ID" value="AAK74957.1"/>
    <property type="molecule type" value="Genomic_DNA"/>
</dbReference>
<dbReference type="PIR" id="D95095">
    <property type="entry name" value="D95095"/>
</dbReference>
<dbReference type="RefSeq" id="WP_000192090.1">
    <property type="nucleotide sequence ID" value="NZ_CP155539.1"/>
</dbReference>
<dbReference type="SMR" id="Q97RI9"/>
<dbReference type="PaxDb" id="170187-SP_0825"/>
<dbReference type="EnsemblBacteria" id="AAK74957">
    <property type="protein sequence ID" value="AAK74957"/>
    <property type="gene ID" value="SP_0825"/>
</dbReference>
<dbReference type="KEGG" id="spn:SP_0825"/>
<dbReference type="eggNOG" id="COG0190">
    <property type="taxonomic scope" value="Bacteria"/>
</dbReference>
<dbReference type="PhylomeDB" id="Q97RI9"/>
<dbReference type="BioCyc" id="SPNE170187:G1FZB-843-MONOMER"/>
<dbReference type="UniPathway" id="UPA00193"/>
<dbReference type="Proteomes" id="UP000000585">
    <property type="component" value="Chromosome"/>
</dbReference>
<dbReference type="GO" id="GO:0005829">
    <property type="term" value="C:cytosol"/>
    <property type="evidence" value="ECO:0007669"/>
    <property type="project" value="TreeGrafter"/>
</dbReference>
<dbReference type="GO" id="GO:0004477">
    <property type="term" value="F:methenyltetrahydrofolate cyclohydrolase activity"/>
    <property type="evidence" value="ECO:0007669"/>
    <property type="project" value="UniProtKB-UniRule"/>
</dbReference>
<dbReference type="GO" id="GO:0004488">
    <property type="term" value="F:methylenetetrahydrofolate dehydrogenase (NADP+) activity"/>
    <property type="evidence" value="ECO:0007669"/>
    <property type="project" value="UniProtKB-UniRule"/>
</dbReference>
<dbReference type="GO" id="GO:0000105">
    <property type="term" value="P:L-histidine biosynthetic process"/>
    <property type="evidence" value="ECO:0007669"/>
    <property type="project" value="UniProtKB-KW"/>
</dbReference>
<dbReference type="GO" id="GO:0009086">
    <property type="term" value="P:methionine biosynthetic process"/>
    <property type="evidence" value="ECO:0007669"/>
    <property type="project" value="UniProtKB-KW"/>
</dbReference>
<dbReference type="GO" id="GO:0006164">
    <property type="term" value="P:purine nucleotide biosynthetic process"/>
    <property type="evidence" value="ECO:0007669"/>
    <property type="project" value="UniProtKB-KW"/>
</dbReference>
<dbReference type="GO" id="GO:0035999">
    <property type="term" value="P:tetrahydrofolate interconversion"/>
    <property type="evidence" value="ECO:0007669"/>
    <property type="project" value="UniProtKB-UniRule"/>
</dbReference>
<dbReference type="CDD" id="cd01080">
    <property type="entry name" value="NAD_bind_m-THF_DH_Cyclohyd"/>
    <property type="match status" value="1"/>
</dbReference>
<dbReference type="FunFam" id="3.40.50.720:FF:000094">
    <property type="entry name" value="Bifunctional protein FolD"/>
    <property type="match status" value="1"/>
</dbReference>
<dbReference type="FunFam" id="3.40.50.10860:FF:000005">
    <property type="entry name" value="C-1-tetrahydrofolate synthase, cytoplasmic, putative"/>
    <property type="match status" value="1"/>
</dbReference>
<dbReference type="Gene3D" id="3.40.50.10860">
    <property type="entry name" value="Leucine Dehydrogenase, chain A, domain 1"/>
    <property type="match status" value="1"/>
</dbReference>
<dbReference type="Gene3D" id="3.40.50.720">
    <property type="entry name" value="NAD(P)-binding Rossmann-like Domain"/>
    <property type="match status" value="1"/>
</dbReference>
<dbReference type="HAMAP" id="MF_01576">
    <property type="entry name" value="THF_DHG_CYH"/>
    <property type="match status" value="1"/>
</dbReference>
<dbReference type="InterPro" id="IPR046346">
    <property type="entry name" value="Aminoacid_DH-like_N_sf"/>
</dbReference>
<dbReference type="InterPro" id="IPR036291">
    <property type="entry name" value="NAD(P)-bd_dom_sf"/>
</dbReference>
<dbReference type="InterPro" id="IPR000672">
    <property type="entry name" value="THF_DH/CycHdrlase"/>
</dbReference>
<dbReference type="InterPro" id="IPR020630">
    <property type="entry name" value="THF_DH/CycHdrlase_cat_dom"/>
</dbReference>
<dbReference type="InterPro" id="IPR020867">
    <property type="entry name" value="THF_DH/CycHdrlase_CS"/>
</dbReference>
<dbReference type="InterPro" id="IPR020631">
    <property type="entry name" value="THF_DH/CycHdrlase_NAD-bd_dom"/>
</dbReference>
<dbReference type="NCBIfam" id="NF008058">
    <property type="entry name" value="PRK10792.1"/>
    <property type="match status" value="1"/>
</dbReference>
<dbReference type="NCBIfam" id="NF010776">
    <property type="entry name" value="PRK14179.1"/>
    <property type="match status" value="1"/>
</dbReference>
<dbReference type="NCBIfam" id="NF010783">
    <property type="entry name" value="PRK14186.1"/>
    <property type="match status" value="1"/>
</dbReference>
<dbReference type="PANTHER" id="PTHR48099:SF5">
    <property type="entry name" value="C-1-TETRAHYDROFOLATE SYNTHASE, CYTOPLASMIC"/>
    <property type="match status" value="1"/>
</dbReference>
<dbReference type="PANTHER" id="PTHR48099">
    <property type="entry name" value="C-1-TETRAHYDROFOLATE SYNTHASE, CYTOPLASMIC-RELATED"/>
    <property type="match status" value="1"/>
</dbReference>
<dbReference type="Pfam" id="PF00763">
    <property type="entry name" value="THF_DHG_CYH"/>
    <property type="match status" value="1"/>
</dbReference>
<dbReference type="Pfam" id="PF02882">
    <property type="entry name" value="THF_DHG_CYH_C"/>
    <property type="match status" value="1"/>
</dbReference>
<dbReference type="PRINTS" id="PR00085">
    <property type="entry name" value="THFDHDRGNASE"/>
</dbReference>
<dbReference type="SUPFAM" id="SSF53223">
    <property type="entry name" value="Aminoacid dehydrogenase-like, N-terminal domain"/>
    <property type="match status" value="1"/>
</dbReference>
<dbReference type="SUPFAM" id="SSF51735">
    <property type="entry name" value="NAD(P)-binding Rossmann-fold domains"/>
    <property type="match status" value="1"/>
</dbReference>
<dbReference type="PROSITE" id="PS00766">
    <property type="entry name" value="THF_DHG_CYH_1"/>
    <property type="match status" value="1"/>
</dbReference>
<dbReference type="PROSITE" id="PS00767">
    <property type="entry name" value="THF_DHG_CYH_2"/>
    <property type="match status" value="1"/>
</dbReference>
<gene>
    <name evidence="1" type="primary">folD</name>
    <name type="ordered locus">SP_0825</name>
</gene>
<organism>
    <name type="scientific">Streptococcus pneumoniae serotype 4 (strain ATCC BAA-334 / TIGR4)</name>
    <dbReference type="NCBI Taxonomy" id="170187"/>
    <lineage>
        <taxon>Bacteria</taxon>
        <taxon>Bacillati</taxon>
        <taxon>Bacillota</taxon>
        <taxon>Bacilli</taxon>
        <taxon>Lactobacillales</taxon>
        <taxon>Streptococcaceae</taxon>
        <taxon>Streptococcus</taxon>
    </lineage>
</organism>
<protein>
    <recommendedName>
        <fullName evidence="1">Bifunctional protein FolD</fullName>
    </recommendedName>
    <domain>
        <recommendedName>
            <fullName evidence="1">Methylenetetrahydrofolate dehydrogenase</fullName>
            <ecNumber evidence="1">1.5.1.5</ecNumber>
        </recommendedName>
    </domain>
    <domain>
        <recommendedName>
            <fullName evidence="1">Methenyltetrahydrofolate cyclohydrolase</fullName>
            <ecNumber evidence="1">3.5.4.9</ecNumber>
        </recommendedName>
    </domain>
</protein>
<proteinExistence type="inferred from homology"/>
<name>FOLD_STRPN</name>
<sequence>MTQIIDGKALAAKLQGQLAEKTAKLKEETGLVPGLVVILVGDNPASQVYVRNKERSALAAGFRSEVVRVPETITQEELLDLIAKYNQDPAWHGILVQLPLPKHIDEEAVLLAIDPEKDVDGFHPLNMGRLWSGHPVMIPSTPAGIMEMFHEYGIDLEGKNAVVIGRSNIVGKPMAQLLLAKNATVTLTHSRTHNLSKVAAKADILVVAIGRAKFVTADFVKPGAVVIDVGMNRDENGKLCGDVDYEAVAPLASHITPVPGGVGPMTITMLMEQTYQAALRTLDRK</sequence>
<feature type="chain" id="PRO_0000268512" description="Bifunctional protein FolD">
    <location>
        <begin position="1"/>
        <end position="285"/>
    </location>
</feature>
<feature type="binding site" evidence="1">
    <location>
        <begin position="165"/>
        <end position="167"/>
    </location>
    <ligand>
        <name>NADP(+)</name>
        <dbReference type="ChEBI" id="CHEBI:58349"/>
    </ligand>
</feature>
<feature type="binding site" evidence="1">
    <location>
        <position position="190"/>
    </location>
    <ligand>
        <name>NADP(+)</name>
        <dbReference type="ChEBI" id="CHEBI:58349"/>
    </ligand>
</feature>
<comment type="function">
    <text evidence="1">Catalyzes the oxidation of 5,10-methylenetetrahydrofolate to 5,10-methenyltetrahydrofolate and then the hydrolysis of 5,10-methenyltetrahydrofolate to 10-formyltetrahydrofolate.</text>
</comment>
<comment type="catalytic activity">
    <reaction evidence="1">
        <text>(6R)-5,10-methylene-5,6,7,8-tetrahydrofolate + NADP(+) = (6R)-5,10-methenyltetrahydrofolate + NADPH</text>
        <dbReference type="Rhea" id="RHEA:22812"/>
        <dbReference type="ChEBI" id="CHEBI:15636"/>
        <dbReference type="ChEBI" id="CHEBI:57455"/>
        <dbReference type="ChEBI" id="CHEBI:57783"/>
        <dbReference type="ChEBI" id="CHEBI:58349"/>
        <dbReference type="EC" id="1.5.1.5"/>
    </reaction>
</comment>
<comment type="catalytic activity">
    <reaction evidence="1">
        <text>(6R)-5,10-methenyltetrahydrofolate + H2O = (6R)-10-formyltetrahydrofolate + H(+)</text>
        <dbReference type="Rhea" id="RHEA:23700"/>
        <dbReference type="ChEBI" id="CHEBI:15377"/>
        <dbReference type="ChEBI" id="CHEBI:15378"/>
        <dbReference type="ChEBI" id="CHEBI:57455"/>
        <dbReference type="ChEBI" id="CHEBI:195366"/>
        <dbReference type="EC" id="3.5.4.9"/>
    </reaction>
</comment>
<comment type="pathway">
    <text evidence="1">One-carbon metabolism; tetrahydrofolate interconversion.</text>
</comment>
<comment type="subunit">
    <text evidence="1">Homodimer.</text>
</comment>
<comment type="similarity">
    <text evidence="1">Belongs to the tetrahydrofolate dehydrogenase/cyclohydrolase family.</text>
</comment>
<keyword id="KW-0028">Amino-acid biosynthesis</keyword>
<keyword id="KW-0368">Histidine biosynthesis</keyword>
<keyword id="KW-0378">Hydrolase</keyword>
<keyword id="KW-0486">Methionine biosynthesis</keyword>
<keyword id="KW-0511">Multifunctional enzyme</keyword>
<keyword id="KW-0521">NADP</keyword>
<keyword id="KW-0554">One-carbon metabolism</keyword>
<keyword id="KW-0560">Oxidoreductase</keyword>
<keyword id="KW-0658">Purine biosynthesis</keyword>
<keyword id="KW-1185">Reference proteome</keyword>
<evidence type="ECO:0000255" key="1">
    <source>
        <dbReference type="HAMAP-Rule" id="MF_01576"/>
    </source>
</evidence>
<accession>Q97RI9</accession>
<reference key="1">
    <citation type="journal article" date="2001" name="Science">
        <title>Complete genome sequence of a virulent isolate of Streptococcus pneumoniae.</title>
        <authorList>
            <person name="Tettelin H."/>
            <person name="Nelson K.E."/>
            <person name="Paulsen I.T."/>
            <person name="Eisen J.A."/>
            <person name="Read T.D."/>
            <person name="Peterson S.N."/>
            <person name="Heidelberg J.F."/>
            <person name="DeBoy R.T."/>
            <person name="Haft D.H."/>
            <person name="Dodson R.J."/>
            <person name="Durkin A.S."/>
            <person name="Gwinn M.L."/>
            <person name="Kolonay J.F."/>
            <person name="Nelson W.C."/>
            <person name="Peterson J.D."/>
            <person name="Umayam L.A."/>
            <person name="White O."/>
            <person name="Salzberg S.L."/>
            <person name="Lewis M.R."/>
            <person name="Radune D."/>
            <person name="Holtzapple E.K."/>
            <person name="Khouri H.M."/>
            <person name="Wolf A.M."/>
            <person name="Utterback T.R."/>
            <person name="Hansen C.L."/>
            <person name="McDonald L.A."/>
            <person name="Feldblyum T.V."/>
            <person name="Angiuoli S.V."/>
            <person name="Dickinson T."/>
            <person name="Hickey E.K."/>
            <person name="Holt I.E."/>
            <person name="Loftus B.J."/>
            <person name="Yang F."/>
            <person name="Smith H.O."/>
            <person name="Venter J.C."/>
            <person name="Dougherty B.A."/>
            <person name="Morrison D.A."/>
            <person name="Hollingshead S.K."/>
            <person name="Fraser C.M."/>
        </authorList>
    </citation>
    <scope>NUCLEOTIDE SEQUENCE [LARGE SCALE GENOMIC DNA]</scope>
    <source>
        <strain>ATCC BAA-334 / TIGR4</strain>
    </source>
</reference>